<accession>B1JUD7</accession>
<sequence length="389" mass="42328">MPLPTNQLRLAMVAGEPSGDLLAASLLGGLRERLPESAQYYGIGGQRMIAQGFDSHWQMDKLTVRGYVEALGQIPEILRIRGELKRQLLAERPAAFIGVDAPDFNFNVEQAARDAGIPSIHFVCPSIWAWRGGRIKKIAKSVDHMLCLFPFEPAILDKAGVASTYVGHPLADDIPLEPDTHGARIALGLPADGPVIAVLPGSRRSEIALIGPTFFAAMALMQQREPGVRFVMPAATPALRELLQPLVDAHPQLALTITDGRSQVAMTAADAILVKSGTVTLEAALLKKPMVISYKVPWLTGQIMRRQGYLPYVGLPNILAGRFVVPELLQHFATPEALADATLTQLRDDANRRTLTEVFTEMHLSLRQNTAAKAAEAVVRVLEQRKGRA</sequence>
<dbReference type="EC" id="2.4.1.182" evidence="1"/>
<dbReference type="EMBL" id="CP000958">
    <property type="protein sequence ID" value="ACA91187.1"/>
    <property type="molecule type" value="Genomic_DNA"/>
</dbReference>
<dbReference type="RefSeq" id="WP_012328755.1">
    <property type="nucleotide sequence ID" value="NC_010508.1"/>
</dbReference>
<dbReference type="SMR" id="B1JUD7"/>
<dbReference type="CAZy" id="GT19">
    <property type="family name" value="Glycosyltransferase Family 19"/>
</dbReference>
<dbReference type="GeneID" id="83048803"/>
<dbReference type="KEGG" id="bcm:Bcenmc03_2026"/>
<dbReference type="HOGENOM" id="CLU_036577_3_0_4"/>
<dbReference type="UniPathway" id="UPA00973"/>
<dbReference type="Proteomes" id="UP000002169">
    <property type="component" value="Chromosome 1"/>
</dbReference>
<dbReference type="GO" id="GO:0016020">
    <property type="term" value="C:membrane"/>
    <property type="evidence" value="ECO:0007669"/>
    <property type="project" value="GOC"/>
</dbReference>
<dbReference type="GO" id="GO:0008915">
    <property type="term" value="F:lipid-A-disaccharide synthase activity"/>
    <property type="evidence" value="ECO:0007669"/>
    <property type="project" value="UniProtKB-UniRule"/>
</dbReference>
<dbReference type="GO" id="GO:0005543">
    <property type="term" value="F:phospholipid binding"/>
    <property type="evidence" value="ECO:0007669"/>
    <property type="project" value="TreeGrafter"/>
</dbReference>
<dbReference type="GO" id="GO:0009245">
    <property type="term" value="P:lipid A biosynthetic process"/>
    <property type="evidence" value="ECO:0007669"/>
    <property type="project" value="UniProtKB-UniRule"/>
</dbReference>
<dbReference type="HAMAP" id="MF_00392">
    <property type="entry name" value="LpxB"/>
    <property type="match status" value="1"/>
</dbReference>
<dbReference type="InterPro" id="IPR003835">
    <property type="entry name" value="Glyco_trans_19"/>
</dbReference>
<dbReference type="NCBIfam" id="TIGR00215">
    <property type="entry name" value="lpxB"/>
    <property type="match status" value="1"/>
</dbReference>
<dbReference type="PANTHER" id="PTHR30372">
    <property type="entry name" value="LIPID-A-DISACCHARIDE SYNTHASE"/>
    <property type="match status" value="1"/>
</dbReference>
<dbReference type="PANTHER" id="PTHR30372:SF4">
    <property type="entry name" value="LIPID-A-DISACCHARIDE SYNTHASE, MITOCHONDRIAL-RELATED"/>
    <property type="match status" value="1"/>
</dbReference>
<dbReference type="Pfam" id="PF02684">
    <property type="entry name" value="LpxB"/>
    <property type="match status" value="1"/>
</dbReference>
<dbReference type="SUPFAM" id="SSF53756">
    <property type="entry name" value="UDP-Glycosyltransferase/glycogen phosphorylase"/>
    <property type="match status" value="1"/>
</dbReference>
<organism>
    <name type="scientific">Burkholderia orbicola (strain MC0-3)</name>
    <dbReference type="NCBI Taxonomy" id="406425"/>
    <lineage>
        <taxon>Bacteria</taxon>
        <taxon>Pseudomonadati</taxon>
        <taxon>Pseudomonadota</taxon>
        <taxon>Betaproteobacteria</taxon>
        <taxon>Burkholderiales</taxon>
        <taxon>Burkholderiaceae</taxon>
        <taxon>Burkholderia</taxon>
        <taxon>Burkholderia cepacia complex</taxon>
        <taxon>Burkholderia orbicola</taxon>
    </lineage>
</organism>
<comment type="function">
    <text evidence="1">Condensation of UDP-2,3-diacylglucosamine and 2,3-diacylglucosamine-1-phosphate to form lipid A disaccharide, a precursor of lipid A, a phosphorylated glycolipid that anchors the lipopolysaccharide to the outer membrane of the cell.</text>
</comment>
<comment type="catalytic activity">
    <reaction evidence="1">
        <text>a lipid X + a UDP-2-N,3-O-bis[(3R)-3-hydroxyacyl]-alpha-D-glucosamine = a lipid A disaccharide + UDP + H(+)</text>
        <dbReference type="Rhea" id="RHEA:67828"/>
        <dbReference type="ChEBI" id="CHEBI:15378"/>
        <dbReference type="ChEBI" id="CHEBI:58223"/>
        <dbReference type="ChEBI" id="CHEBI:137748"/>
        <dbReference type="ChEBI" id="CHEBI:176338"/>
        <dbReference type="ChEBI" id="CHEBI:176343"/>
        <dbReference type="EC" id="2.4.1.182"/>
    </reaction>
</comment>
<comment type="pathway">
    <text evidence="1">Bacterial outer membrane biogenesis; LPS lipid A biosynthesis.</text>
</comment>
<comment type="similarity">
    <text evidence="1">Belongs to the LpxB family.</text>
</comment>
<name>LPXB_BURO0</name>
<gene>
    <name evidence="1" type="primary">lpxB</name>
    <name type="ordered locus">Bcenmc03_2026</name>
</gene>
<feature type="chain" id="PRO_1000191464" description="Lipid-A-disaccharide synthase">
    <location>
        <begin position="1"/>
        <end position="389"/>
    </location>
</feature>
<proteinExistence type="inferred from homology"/>
<keyword id="KW-0328">Glycosyltransferase</keyword>
<keyword id="KW-0441">Lipid A biosynthesis</keyword>
<keyword id="KW-0444">Lipid biosynthesis</keyword>
<keyword id="KW-0443">Lipid metabolism</keyword>
<keyword id="KW-0808">Transferase</keyword>
<protein>
    <recommendedName>
        <fullName evidence="1">Lipid-A-disaccharide synthase</fullName>
        <ecNumber evidence="1">2.4.1.182</ecNumber>
    </recommendedName>
</protein>
<evidence type="ECO:0000255" key="1">
    <source>
        <dbReference type="HAMAP-Rule" id="MF_00392"/>
    </source>
</evidence>
<reference key="1">
    <citation type="submission" date="2008-02" db="EMBL/GenBank/DDBJ databases">
        <title>Complete sequence of chromosome 1 of Burkholderia cenocepacia MC0-3.</title>
        <authorList>
            <person name="Copeland A."/>
            <person name="Lucas S."/>
            <person name="Lapidus A."/>
            <person name="Barry K."/>
            <person name="Bruce D."/>
            <person name="Goodwin L."/>
            <person name="Glavina del Rio T."/>
            <person name="Dalin E."/>
            <person name="Tice H."/>
            <person name="Pitluck S."/>
            <person name="Chain P."/>
            <person name="Malfatti S."/>
            <person name="Shin M."/>
            <person name="Vergez L."/>
            <person name="Schmutz J."/>
            <person name="Larimer F."/>
            <person name="Land M."/>
            <person name="Hauser L."/>
            <person name="Kyrpides N."/>
            <person name="Mikhailova N."/>
            <person name="Tiedje J."/>
            <person name="Richardson P."/>
        </authorList>
    </citation>
    <scope>NUCLEOTIDE SEQUENCE [LARGE SCALE GENOMIC DNA]</scope>
    <source>
        <strain>MC0-3</strain>
    </source>
</reference>